<comment type="function">
    <text evidence="1">NDH-1 shuttles electrons from NADH, via FMN and iron-sulfur (Fe-S) centers, to quinones in the respiratory chain. The immediate electron acceptor for the enzyme in this species is believed to be ubiquinone. Couples the redox reaction to proton translocation (for every two electrons transferred, four hydrogen ions are translocated across the cytoplasmic membrane), and thus conserves the redox energy in a proton gradient.</text>
</comment>
<comment type="catalytic activity">
    <reaction evidence="1">
        <text>a quinone + NADH + 5 H(+)(in) = a quinol + NAD(+) + 4 H(+)(out)</text>
        <dbReference type="Rhea" id="RHEA:57888"/>
        <dbReference type="ChEBI" id="CHEBI:15378"/>
        <dbReference type="ChEBI" id="CHEBI:24646"/>
        <dbReference type="ChEBI" id="CHEBI:57540"/>
        <dbReference type="ChEBI" id="CHEBI:57945"/>
        <dbReference type="ChEBI" id="CHEBI:132124"/>
    </reaction>
</comment>
<comment type="subunit">
    <text evidence="1">NDH-1 is composed of 14 different subunits. Subunits NuoB, C, D, E, F, and G constitute the peripheral sector of the complex.</text>
</comment>
<comment type="subcellular location">
    <subcellularLocation>
        <location evidence="1">Cell inner membrane</location>
        <topology evidence="1">Peripheral membrane protein</topology>
        <orientation evidence="1">Cytoplasmic side</orientation>
    </subcellularLocation>
</comment>
<comment type="similarity">
    <text evidence="1">Belongs to the complex I 49 kDa subunit family.</text>
</comment>
<accession>B3DXN7</accession>
<dbReference type="EC" id="7.1.1.-" evidence="1"/>
<dbReference type="EMBL" id="CP000975">
    <property type="protein sequence ID" value="ACD82271.1"/>
    <property type="molecule type" value="Genomic_DNA"/>
</dbReference>
<dbReference type="RefSeq" id="WP_012462553.1">
    <property type="nucleotide sequence ID" value="NC_010794.1"/>
</dbReference>
<dbReference type="SMR" id="B3DXN7"/>
<dbReference type="STRING" id="481448.Minf_0211"/>
<dbReference type="KEGG" id="min:Minf_0211"/>
<dbReference type="eggNOG" id="COG0649">
    <property type="taxonomic scope" value="Bacteria"/>
</dbReference>
<dbReference type="HOGENOM" id="CLU_015134_1_2_0"/>
<dbReference type="OrthoDB" id="9801496at2"/>
<dbReference type="Proteomes" id="UP000009149">
    <property type="component" value="Chromosome"/>
</dbReference>
<dbReference type="GO" id="GO:0005886">
    <property type="term" value="C:plasma membrane"/>
    <property type="evidence" value="ECO:0007669"/>
    <property type="project" value="UniProtKB-SubCell"/>
</dbReference>
<dbReference type="GO" id="GO:0051287">
    <property type="term" value="F:NAD binding"/>
    <property type="evidence" value="ECO:0007669"/>
    <property type="project" value="InterPro"/>
</dbReference>
<dbReference type="GO" id="GO:0050136">
    <property type="term" value="F:NADH:ubiquinone reductase (non-electrogenic) activity"/>
    <property type="evidence" value="ECO:0007669"/>
    <property type="project" value="UniProtKB-UniRule"/>
</dbReference>
<dbReference type="GO" id="GO:0048038">
    <property type="term" value="F:quinone binding"/>
    <property type="evidence" value="ECO:0007669"/>
    <property type="project" value="UniProtKB-KW"/>
</dbReference>
<dbReference type="Gene3D" id="1.10.645.10">
    <property type="entry name" value="Cytochrome-c3 Hydrogenase, chain B"/>
    <property type="match status" value="1"/>
</dbReference>
<dbReference type="HAMAP" id="MF_01358">
    <property type="entry name" value="NDH1_NuoD"/>
    <property type="match status" value="1"/>
</dbReference>
<dbReference type="InterPro" id="IPR001135">
    <property type="entry name" value="NADH_Q_OxRdtase_suD"/>
</dbReference>
<dbReference type="InterPro" id="IPR022885">
    <property type="entry name" value="NDH1_su_D/H"/>
</dbReference>
<dbReference type="InterPro" id="IPR029014">
    <property type="entry name" value="NiFe-Hase_large"/>
</dbReference>
<dbReference type="NCBIfam" id="TIGR01962">
    <property type="entry name" value="NuoD"/>
    <property type="match status" value="1"/>
</dbReference>
<dbReference type="NCBIfam" id="NF004739">
    <property type="entry name" value="PRK06075.1"/>
    <property type="match status" value="1"/>
</dbReference>
<dbReference type="PANTHER" id="PTHR11993:SF10">
    <property type="entry name" value="NADH DEHYDROGENASE [UBIQUINONE] IRON-SULFUR PROTEIN 2, MITOCHONDRIAL"/>
    <property type="match status" value="1"/>
</dbReference>
<dbReference type="PANTHER" id="PTHR11993">
    <property type="entry name" value="NADH-UBIQUINONE OXIDOREDUCTASE 49 KDA SUBUNIT"/>
    <property type="match status" value="1"/>
</dbReference>
<dbReference type="Pfam" id="PF00346">
    <property type="entry name" value="Complex1_49kDa"/>
    <property type="match status" value="1"/>
</dbReference>
<dbReference type="SUPFAM" id="SSF56762">
    <property type="entry name" value="HydB/Nqo4-like"/>
    <property type="match status" value="1"/>
</dbReference>
<name>NUOD_METI4</name>
<reference key="1">
    <citation type="journal article" date="2008" name="Biol. Direct">
        <title>Complete genome sequence of the extremely acidophilic methanotroph isolate V4, Methylacidiphilum infernorum, a representative of the bacterial phylum Verrucomicrobia.</title>
        <authorList>
            <person name="Hou S."/>
            <person name="Makarova K.S."/>
            <person name="Saw J.H."/>
            <person name="Senin P."/>
            <person name="Ly B.V."/>
            <person name="Zhou Z."/>
            <person name="Ren Y."/>
            <person name="Wang J."/>
            <person name="Galperin M.Y."/>
            <person name="Omelchenko M.V."/>
            <person name="Wolf Y.I."/>
            <person name="Yutin N."/>
            <person name="Koonin E.V."/>
            <person name="Stott M.B."/>
            <person name="Mountain B.W."/>
            <person name="Crowe M.A."/>
            <person name="Smirnova A.V."/>
            <person name="Dunfield P.F."/>
            <person name="Feng L."/>
            <person name="Wang L."/>
            <person name="Alam M."/>
        </authorList>
    </citation>
    <scope>NUCLEOTIDE SEQUENCE [LARGE SCALE GENOMIC DNA]</scope>
    <source>
        <strain>Isolate V4</strain>
    </source>
</reference>
<keyword id="KW-0997">Cell inner membrane</keyword>
<keyword id="KW-1003">Cell membrane</keyword>
<keyword id="KW-0472">Membrane</keyword>
<keyword id="KW-0520">NAD</keyword>
<keyword id="KW-0874">Quinone</keyword>
<keyword id="KW-1278">Translocase</keyword>
<keyword id="KW-0813">Transport</keyword>
<keyword id="KW-0830">Ubiquinone</keyword>
<organism>
    <name type="scientific">Methylacidiphilum infernorum (isolate V4)</name>
    <name type="common">Methylokorus infernorum (strain V4)</name>
    <dbReference type="NCBI Taxonomy" id="481448"/>
    <lineage>
        <taxon>Bacteria</taxon>
        <taxon>Pseudomonadati</taxon>
        <taxon>Verrucomicrobiota</taxon>
        <taxon>Methylacidiphilae</taxon>
        <taxon>Methylacidiphilales</taxon>
        <taxon>Methylacidiphilaceae</taxon>
        <taxon>Methylacidiphilum (ex Ratnadevi et al. 2023)</taxon>
    </lineage>
</organism>
<proteinExistence type="inferred from homology"/>
<sequence length="418" mass="46606">MAEGLTREVRMEVPDTAELLRRSEDISGAPEGERLILNMGPSHPSTHGVFQLLLELDGEVITKAIPEVGYLHRGDEKIAENMQYNQFVPYTDRLDYLAPLANNVVYACAVEKLLGWEIPARAQVIRVICSEMARISSHLMGLGAYAMDCGAVSVFLYTFTEREKIYLLIEELTGARFTTSYTRIGGLTRDLPPGWTEKLKDFIKQFLPKVDEIEGLLTKNKIFVDRTQDIGIISKEDAIDYGLTGPNLRGSGVDHDLRKKNPYLGYEKYDFEVPLGSVGDCFDRYMVRIEEMRQSCRILDQALADIPPGPIAVDEPRGYLPKKSAVLTKMEELIQHFIVVTQGVDVPPGEVYFGGENPKGELGFYIVSKGGGVPYRLKIRSPSFVNLSILPKILPGHLLSDVVAILGSLDFVMGECDR</sequence>
<gene>
    <name evidence="1" type="primary">nuoD</name>
    <name type="ordered locus">Minf_0211</name>
</gene>
<feature type="chain" id="PRO_0000357845" description="NADH-quinone oxidoreductase subunit D">
    <location>
        <begin position="1"/>
        <end position="418"/>
    </location>
</feature>
<evidence type="ECO:0000255" key="1">
    <source>
        <dbReference type="HAMAP-Rule" id="MF_01358"/>
    </source>
</evidence>
<protein>
    <recommendedName>
        <fullName evidence="1">NADH-quinone oxidoreductase subunit D</fullName>
        <ecNumber evidence="1">7.1.1.-</ecNumber>
    </recommendedName>
    <alternativeName>
        <fullName evidence="1">NADH dehydrogenase I subunit D</fullName>
    </alternativeName>
    <alternativeName>
        <fullName evidence="1">NDH-1 subunit D</fullName>
    </alternativeName>
</protein>